<gene>
    <name type="primary">Otof</name>
    <name type="synonym">Fer1l2</name>
</gene>
<feature type="chain" id="PRO_0000057882" description="Otoferlin">
    <location>
        <begin position="1"/>
        <end position="1997"/>
    </location>
</feature>
<feature type="topological domain" description="Cytoplasmic" evidence="2">
    <location>
        <begin position="1"/>
        <end position="1963"/>
    </location>
</feature>
<feature type="transmembrane region" description="Helical" evidence="2">
    <location>
        <begin position="1964"/>
        <end position="1984"/>
    </location>
</feature>
<feature type="topological domain" description="Extracellular" evidence="2">
    <location>
        <begin position="1985"/>
        <end position="1997"/>
    </location>
</feature>
<feature type="domain" description="C2 1" evidence="3">
    <location>
        <begin position="1"/>
        <end position="98"/>
    </location>
</feature>
<feature type="domain" description="C2 2" evidence="3">
    <location>
        <begin position="235"/>
        <end position="356"/>
    </location>
</feature>
<feature type="domain" description="C2 3" evidence="3">
    <location>
        <begin position="399"/>
        <end position="530"/>
    </location>
</feature>
<feature type="domain" description="C2 4" evidence="3">
    <location>
        <begin position="943"/>
        <end position="1068"/>
    </location>
</feature>
<feature type="domain" description="C2 5" evidence="3">
    <location>
        <begin position="1115"/>
        <end position="1241"/>
    </location>
</feature>
<feature type="domain" description="C2 6" evidence="3">
    <location>
        <begin position="1464"/>
        <end position="1593"/>
    </location>
</feature>
<feature type="domain" description="C2 7" evidence="3">
    <location>
        <begin position="1714"/>
        <end position="1865"/>
    </location>
</feature>
<feature type="region of interest" description="Disordered" evidence="4">
    <location>
        <begin position="140"/>
        <end position="167"/>
    </location>
</feature>
<feature type="region of interest" description="Disordered" evidence="4">
    <location>
        <begin position="643"/>
        <end position="692"/>
    </location>
</feature>
<feature type="region of interest" description="Disordered" evidence="4">
    <location>
        <begin position="1253"/>
        <end position="1272"/>
    </location>
</feature>
<feature type="region of interest" description="Disordered" evidence="4">
    <location>
        <begin position="1296"/>
        <end position="1326"/>
    </location>
</feature>
<feature type="region of interest" description="Disordered" evidence="4">
    <location>
        <begin position="1343"/>
        <end position="1402"/>
    </location>
</feature>
<feature type="coiled-coil region" evidence="2">
    <location>
        <begin position="791"/>
        <end position="820"/>
    </location>
</feature>
<feature type="compositionally biased region" description="Acidic residues" evidence="4">
    <location>
        <begin position="659"/>
        <end position="679"/>
    </location>
</feature>
<feature type="compositionally biased region" description="Acidic residues" evidence="4">
    <location>
        <begin position="1314"/>
        <end position="1325"/>
    </location>
</feature>
<feature type="compositionally biased region" description="Acidic residues" evidence="4">
    <location>
        <begin position="1352"/>
        <end position="1361"/>
    </location>
</feature>
<feature type="compositionally biased region" description="Basic and acidic residues" evidence="4">
    <location>
        <begin position="1370"/>
        <end position="1383"/>
    </location>
</feature>
<feature type="binding site" evidence="3">
    <location>
        <position position="975"/>
    </location>
    <ligand>
        <name>Ca(2+)</name>
        <dbReference type="ChEBI" id="CHEBI:29108"/>
        <label>1</label>
    </ligand>
</feature>
<feature type="binding site" evidence="3">
    <location>
        <position position="975"/>
    </location>
    <ligand>
        <name>Ca(2+)</name>
        <dbReference type="ChEBI" id="CHEBI:29108"/>
        <label>2</label>
    </ligand>
</feature>
<feature type="binding site" evidence="3">
    <location>
        <position position="981"/>
    </location>
    <ligand>
        <name>Ca(2+)</name>
        <dbReference type="ChEBI" id="CHEBI:29108"/>
        <label>1</label>
    </ligand>
</feature>
<feature type="binding site" evidence="3">
    <location>
        <position position="1037"/>
    </location>
    <ligand>
        <name>Ca(2+)</name>
        <dbReference type="ChEBI" id="CHEBI:29108"/>
        <label>1</label>
    </ligand>
</feature>
<feature type="binding site" evidence="3">
    <location>
        <position position="1037"/>
    </location>
    <ligand>
        <name>Ca(2+)</name>
        <dbReference type="ChEBI" id="CHEBI:29108"/>
        <label>2</label>
    </ligand>
</feature>
<feature type="binding site" evidence="3">
    <location>
        <position position="1039"/>
    </location>
    <ligand>
        <name>Ca(2+)</name>
        <dbReference type="ChEBI" id="CHEBI:29108"/>
        <label>1</label>
    </ligand>
</feature>
<feature type="binding site" evidence="3">
    <location>
        <position position="1039"/>
    </location>
    <ligand>
        <name>Ca(2+)</name>
        <dbReference type="ChEBI" id="CHEBI:29108"/>
        <label>2</label>
    </ligand>
</feature>
<feature type="binding site" evidence="3">
    <location>
        <position position="1045"/>
    </location>
    <ligand>
        <name>Ca(2+)</name>
        <dbReference type="ChEBI" id="CHEBI:29108"/>
        <label>2</label>
    </ligand>
</feature>
<feature type="binding site" evidence="3">
    <location>
        <position position="1508"/>
    </location>
    <ligand>
        <name>Ca(2+)</name>
        <dbReference type="ChEBI" id="CHEBI:29108"/>
        <label>3</label>
    </ligand>
</feature>
<feature type="binding site" evidence="3">
    <location>
        <position position="1508"/>
    </location>
    <ligand>
        <name>Ca(2+)</name>
        <dbReference type="ChEBI" id="CHEBI:29108"/>
        <label>4</label>
    </ligand>
</feature>
<feature type="binding site" evidence="3">
    <location>
        <position position="1514"/>
    </location>
    <ligand>
        <name>Ca(2+)</name>
        <dbReference type="ChEBI" id="CHEBI:29108"/>
        <label>3</label>
    </ligand>
</feature>
<feature type="binding site" evidence="3">
    <location>
        <position position="1563"/>
    </location>
    <ligand>
        <name>Ca(2+)</name>
        <dbReference type="ChEBI" id="CHEBI:29108"/>
        <label>3</label>
    </ligand>
</feature>
<feature type="binding site" evidence="3">
    <location>
        <position position="1563"/>
    </location>
    <ligand>
        <name>Ca(2+)</name>
        <dbReference type="ChEBI" id="CHEBI:29108"/>
        <label>4</label>
    </ligand>
</feature>
<feature type="binding site" evidence="3">
    <location>
        <position position="1565"/>
    </location>
    <ligand>
        <name>Ca(2+)</name>
        <dbReference type="ChEBI" id="CHEBI:29108"/>
        <label>3</label>
    </ligand>
</feature>
<feature type="binding site" evidence="3">
    <location>
        <position position="1565"/>
    </location>
    <ligand>
        <name>Ca(2+)</name>
        <dbReference type="ChEBI" id="CHEBI:29108"/>
        <label>4</label>
    </ligand>
</feature>
<feature type="binding site" evidence="3">
    <location>
        <position position="1571"/>
    </location>
    <ligand>
        <name>Ca(2+)</name>
        <dbReference type="ChEBI" id="CHEBI:29108"/>
        <label>4</label>
    </ligand>
</feature>
<feature type="binding site" evidence="3">
    <location>
        <position position="1836"/>
    </location>
    <ligand>
        <name>Ca(2+)</name>
        <dbReference type="ChEBI" id="CHEBI:29108"/>
        <label>5</label>
    </ligand>
</feature>
<feature type="binding site" evidence="3">
    <location>
        <position position="1839"/>
    </location>
    <ligand>
        <name>Ca(2+)</name>
        <dbReference type="ChEBI" id="CHEBI:29108"/>
        <label>5</label>
    </ligand>
</feature>
<feature type="binding site" evidence="3">
    <location>
        <position position="1842"/>
    </location>
    <ligand>
        <name>Ca(2+)</name>
        <dbReference type="ChEBI" id="CHEBI:29108"/>
        <label>5</label>
    </ligand>
</feature>
<feature type="splice variant" id="VSP_001512" description="In isoform 2." evidence="11 13 14">
    <original>R</original>
    <variation>SKGREETKGGRDGEHK</variation>
    <location>
        <position position="169"/>
    </location>
</feature>
<feature type="splice variant" id="VSP_001513" description="In isoform 2 and isoform 3." evidence="11 12 13 14">
    <location>
        <begin position="1244"/>
        <end position="1263"/>
    </location>
</feature>
<feature type="splice variant" id="VSP_001514" description="In isoform 2." evidence="11 13 14">
    <original>SFIWFLNPLKSARYFLWHTYRWLLLKFLLLFLLLLLFALFLYSLPGYLAKKILGA</original>
    <variation>AFVWFLNPLKSIKYLICTRYKWLIIKIVLALLGLLMLALFLYSLPGYMVKKLLGA</variation>
    <location>
        <begin position="1943"/>
        <end position="1997"/>
    </location>
</feature>
<feature type="sequence conflict" description="In Ref. 2; AAT40586." evidence="16" ref="2">
    <original>L</original>
    <variation>S</variation>
    <location>
        <position position="826"/>
    </location>
</feature>
<feature type="sequence conflict" description="In Ref. 4; BAC28229." evidence="16" ref="4">
    <original>K</original>
    <variation>E</variation>
    <location>
        <position position="955"/>
    </location>
</feature>
<feature type="sequence conflict" description="In Ref. 3; AAI50703." evidence="16" ref="3">
    <original>R</original>
    <variation>Q</variation>
    <location>
        <position position="1853"/>
    </location>
</feature>
<organism>
    <name type="scientific">Mus musculus</name>
    <name type="common">Mouse</name>
    <dbReference type="NCBI Taxonomy" id="10090"/>
    <lineage>
        <taxon>Eukaryota</taxon>
        <taxon>Metazoa</taxon>
        <taxon>Chordata</taxon>
        <taxon>Craniata</taxon>
        <taxon>Vertebrata</taxon>
        <taxon>Euteleostomi</taxon>
        <taxon>Mammalia</taxon>
        <taxon>Eutheria</taxon>
        <taxon>Euarchontoglires</taxon>
        <taxon>Glires</taxon>
        <taxon>Rodentia</taxon>
        <taxon>Myomorpha</taxon>
        <taxon>Muroidea</taxon>
        <taxon>Muridae</taxon>
        <taxon>Murinae</taxon>
        <taxon>Mus</taxon>
        <taxon>Mus</taxon>
    </lineage>
</organism>
<dbReference type="EMBL" id="AF183183">
    <property type="protein sequence ID" value="AAG12989.1"/>
    <property type="molecule type" value="mRNA"/>
</dbReference>
<dbReference type="EMBL" id="AF183184">
    <property type="protein sequence ID" value="AAG12990.1"/>
    <property type="molecule type" value="mRNA"/>
</dbReference>
<dbReference type="EMBL" id="AY586513">
    <property type="protein sequence ID" value="AAT40586.1"/>
    <property type="molecule type" value="mRNA"/>
</dbReference>
<dbReference type="EMBL" id="BC150702">
    <property type="protein sequence ID" value="AAI50703.1"/>
    <property type="molecule type" value="mRNA"/>
</dbReference>
<dbReference type="EMBL" id="AK033317">
    <property type="protein sequence ID" value="BAC28229.1"/>
    <property type="molecule type" value="mRNA"/>
</dbReference>
<dbReference type="CCDS" id="CCDS19157.1">
    <molecule id="Q9ESF1-1"/>
</dbReference>
<dbReference type="CCDS" id="CCDS51452.1">
    <molecule id="Q9ESF1-2"/>
</dbReference>
<dbReference type="RefSeq" id="NP_001093865.1">
    <property type="nucleotide sequence ID" value="NM_001100395.1"/>
</dbReference>
<dbReference type="RefSeq" id="NP_001273350.1">
    <property type="nucleotide sequence ID" value="NM_001286421.1"/>
</dbReference>
<dbReference type="RefSeq" id="NP_114081.2">
    <property type="nucleotide sequence ID" value="NM_031875.2"/>
</dbReference>
<dbReference type="SMR" id="Q9ESF1"/>
<dbReference type="BioGRID" id="219969">
    <property type="interactions" value="1"/>
</dbReference>
<dbReference type="FunCoup" id="Q9ESF1">
    <property type="interactions" value="9"/>
</dbReference>
<dbReference type="IntAct" id="Q9ESF1">
    <property type="interactions" value="2"/>
</dbReference>
<dbReference type="MINT" id="Q9ESF1"/>
<dbReference type="STRING" id="10090.ENSMUSP00000073803"/>
<dbReference type="GlyGen" id="Q9ESF1">
    <property type="glycosylation" value="2 sites, 2 N-linked glycans (2 sites)"/>
</dbReference>
<dbReference type="iPTMnet" id="Q9ESF1"/>
<dbReference type="PhosphoSitePlus" id="Q9ESF1"/>
<dbReference type="PaxDb" id="10090-ENSMUSP00000073803"/>
<dbReference type="ProteomicsDB" id="294125">
    <molecule id="Q9ESF1-1"/>
</dbReference>
<dbReference type="ProteomicsDB" id="294126">
    <molecule id="Q9ESF1-2"/>
</dbReference>
<dbReference type="ProteomicsDB" id="294127">
    <molecule id="Q9ESF1-3"/>
</dbReference>
<dbReference type="DNASU" id="83762"/>
<dbReference type="GeneID" id="83762"/>
<dbReference type="KEGG" id="mmu:83762"/>
<dbReference type="UCSC" id="uc008wvl.1">
    <molecule id="Q9ESF1-2"/>
    <property type="organism name" value="mouse"/>
</dbReference>
<dbReference type="UCSC" id="uc012dud.1">
    <molecule id="Q9ESF1-3"/>
    <property type="organism name" value="mouse"/>
</dbReference>
<dbReference type="AGR" id="MGI:1891247"/>
<dbReference type="CTD" id="9381"/>
<dbReference type="MGI" id="MGI:1891247">
    <property type="gene designation" value="Otof"/>
</dbReference>
<dbReference type="eggNOG" id="KOG1326">
    <property type="taxonomic scope" value="Eukaryota"/>
</dbReference>
<dbReference type="InParanoid" id="Q9ESF1"/>
<dbReference type="OrthoDB" id="270970at2759"/>
<dbReference type="PhylomeDB" id="Q9ESF1"/>
<dbReference type="BioGRID-ORCS" id="83762">
    <property type="hits" value="1 hit in 78 CRISPR screens"/>
</dbReference>
<dbReference type="PRO" id="PR:Q9ESF1"/>
<dbReference type="Proteomes" id="UP000000589">
    <property type="component" value="Unplaced"/>
</dbReference>
<dbReference type="RNAct" id="Q9ESF1">
    <property type="molecule type" value="protein"/>
</dbReference>
<dbReference type="GO" id="GO:0016323">
    <property type="term" value="C:basolateral plasma membrane"/>
    <property type="evidence" value="ECO:0007669"/>
    <property type="project" value="UniProtKB-SubCell"/>
</dbReference>
<dbReference type="GO" id="GO:0042995">
    <property type="term" value="C:cell projection"/>
    <property type="evidence" value="ECO:0007669"/>
    <property type="project" value="UniProtKB-KW"/>
</dbReference>
<dbReference type="GO" id="GO:0060203">
    <property type="term" value="C:clathrin-sculpted glutamate transport vesicle membrane"/>
    <property type="evidence" value="ECO:0000304"/>
    <property type="project" value="Reactome"/>
</dbReference>
<dbReference type="GO" id="GO:0098683">
    <property type="term" value="C:cochlear hair cell ribbon synapse"/>
    <property type="evidence" value="ECO:0000314"/>
    <property type="project" value="SynGO"/>
</dbReference>
<dbReference type="GO" id="GO:0005783">
    <property type="term" value="C:endoplasmic reticulum"/>
    <property type="evidence" value="ECO:0000314"/>
    <property type="project" value="MGI"/>
</dbReference>
<dbReference type="GO" id="GO:0005789">
    <property type="term" value="C:endoplasmic reticulum membrane"/>
    <property type="evidence" value="ECO:0007669"/>
    <property type="project" value="UniProtKB-SubCell"/>
</dbReference>
<dbReference type="GO" id="GO:0000139">
    <property type="term" value="C:Golgi membrane"/>
    <property type="evidence" value="ECO:0007669"/>
    <property type="project" value="UniProtKB-SubCell"/>
</dbReference>
<dbReference type="GO" id="GO:0048787">
    <property type="term" value="C:presynaptic active zone membrane"/>
    <property type="evidence" value="ECO:0000314"/>
    <property type="project" value="MGI"/>
</dbReference>
<dbReference type="GO" id="GO:0030672">
    <property type="term" value="C:synaptic vesicle membrane"/>
    <property type="evidence" value="ECO:0000314"/>
    <property type="project" value="UniProtKB"/>
</dbReference>
<dbReference type="GO" id="GO:0035612">
    <property type="term" value="F:AP-2 adaptor complex binding"/>
    <property type="evidence" value="ECO:0000314"/>
    <property type="project" value="MGI"/>
</dbReference>
<dbReference type="GO" id="GO:0005509">
    <property type="term" value="F:calcium ion binding"/>
    <property type="evidence" value="ECO:0000314"/>
    <property type="project" value="UniProtKB"/>
</dbReference>
<dbReference type="GO" id="GO:0007605">
    <property type="term" value="P:sensory perception of sound"/>
    <property type="evidence" value="ECO:0000266"/>
    <property type="project" value="MGI"/>
</dbReference>
<dbReference type="GO" id="GO:0001964">
    <property type="term" value="P:startle response"/>
    <property type="evidence" value="ECO:0000266"/>
    <property type="project" value="MGI"/>
</dbReference>
<dbReference type="GO" id="GO:0016079">
    <property type="term" value="P:synaptic vesicle exocytosis"/>
    <property type="evidence" value="ECO:0000314"/>
    <property type="project" value="UniProtKB"/>
</dbReference>
<dbReference type="GO" id="GO:0016082">
    <property type="term" value="P:synaptic vesicle priming"/>
    <property type="evidence" value="ECO:0000314"/>
    <property type="project" value="SynGO"/>
</dbReference>
<dbReference type="CDD" id="cd08373">
    <property type="entry name" value="C2A_Ferlin"/>
    <property type="match status" value="1"/>
</dbReference>
<dbReference type="CDD" id="cd04011">
    <property type="entry name" value="C2B_Ferlin"/>
    <property type="match status" value="1"/>
</dbReference>
<dbReference type="CDD" id="cd04018">
    <property type="entry name" value="C2C_Ferlin"/>
    <property type="match status" value="1"/>
</dbReference>
<dbReference type="CDD" id="cd04017">
    <property type="entry name" value="C2D_Ferlin"/>
    <property type="match status" value="1"/>
</dbReference>
<dbReference type="CDD" id="cd04037">
    <property type="entry name" value="C2E_Ferlin"/>
    <property type="match status" value="1"/>
</dbReference>
<dbReference type="CDD" id="cd08374">
    <property type="entry name" value="C2F_Ferlin"/>
    <property type="match status" value="1"/>
</dbReference>
<dbReference type="FunFam" id="2.60.40.150:FF:000009">
    <property type="entry name" value="dysferlin isoform X2"/>
    <property type="match status" value="1"/>
</dbReference>
<dbReference type="FunFam" id="2.60.40.150:FF:000081">
    <property type="entry name" value="otoferlin isoform X1"/>
    <property type="match status" value="1"/>
</dbReference>
<dbReference type="FunFam" id="2.60.40.150:FF:000089">
    <property type="entry name" value="otoferlin isoform X1"/>
    <property type="match status" value="1"/>
</dbReference>
<dbReference type="FunFam" id="2.60.40.150:FF:000118">
    <property type="entry name" value="otoferlin isoform X1"/>
    <property type="match status" value="1"/>
</dbReference>
<dbReference type="FunFam" id="2.60.40.150:FF:000034">
    <property type="entry name" value="otoferlin isoform X2"/>
    <property type="match status" value="1"/>
</dbReference>
<dbReference type="FunFam" id="2.60.40.150:FF:000054">
    <property type="entry name" value="otoferlin isoform X2"/>
    <property type="match status" value="1"/>
</dbReference>
<dbReference type="Gene3D" id="2.60.40.150">
    <property type="entry name" value="C2 domain"/>
    <property type="match status" value="6"/>
</dbReference>
<dbReference type="InterPro" id="IPR000008">
    <property type="entry name" value="C2_dom"/>
</dbReference>
<dbReference type="InterPro" id="IPR035892">
    <property type="entry name" value="C2_domain_sf"/>
</dbReference>
<dbReference type="InterPro" id="IPR037726">
    <property type="entry name" value="C2A_Ferlin"/>
</dbReference>
<dbReference type="InterPro" id="IPR037720">
    <property type="entry name" value="C2B_Ferlin"/>
</dbReference>
<dbReference type="InterPro" id="IPR037722">
    <property type="entry name" value="C2C_Ferlin"/>
</dbReference>
<dbReference type="InterPro" id="IPR037723">
    <property type="entry name" value="C2D_Ferlin"/>
</dbReference>
<dbReference type="InterPro" id="IPR037724">
    <property type="entry name" value="C2E_Ferlin"/>
</dbReference>
<dbReference type="InterPro" id="IPR037725">
    <property type="entry name" value="C2F_Ferlin"/>
</dbReference>
<dbReference type="InterPro" id="IPR012968">
    <property type="entry name" value="FerIin_dom"/>
</dbReference>
<dbReference type="InterPro" id="IPR037721">
    <property type="entry name" value="Ferlin"/>
</dbReference>
<dbReference type="InterPro" id="IPR012561">
    <property type="entry name" value="Ferlin_B-domain"/>
</dbReference>
<dbReference type="InterPro" id="IPR032362">
    <property type="entry name" value="Ferlin_C"/>
</dbReference>
<dbReference type="InterPro" id="IPR055072">
    <property type="entry name" value="Ferlin_DSRM"/>
</dbReference>
<dbReference type="PANTHER" id="PTHR12546">
    <property type="entry name" value="FER-1-LIKE"/>
    <property type="match status" value="1"/>
</dbReference>
<dbReference type="PANTHER" id="PTHR12546:SF32">
    <property type="entry name" value="OTOFERLIN"/>
    <property type="match status" value="1"/>
</dbReference>
<dbReference type="Pfam" id="PF00168">
    <property type="entry name" value="C2"/>
    <property type="match status" value="6"/>
</dbReference>
<dbReference type="Pfam" id="PF22901">
    <property type="entry name" value="dsrm_Ferlin"/>
    <property type="match status" value="1"/>
</dbReference>
<dbReference type="Pfam" id="PF08150">
    <property type="entry name" value="FerB"/>
    <property type="match status" value="1"/>
</dbReference>
<dbReference type="Pfam" id="PF08151">
    <property type="entry name" value="FerI"/>
    <property type="match status" value="1"/>
</dbReference>
<dbReference type="Pfam" id="PF16165">
    <property type="entry name" value="Ferlin_C"/>
    <property type="match status" value="1"/>
</dbReference>
<dbReference type="PRINTS" id="PR00360">
    <property type="entry name" value="C2DOMAIN"/>
</dbReference>
<dbReference type="SMART" id="SM00239">
    <property type="entry name" value="C2"/>
    <property type="match status" value="6"/>
</dbReference>
<dbReference type="SMART" id="SM01201">
    <property type="entry name" value="FerB"/>
    <property type="match status" value="1"/>
</dbReference>
<dbReference type="SMART" id="SM01202">
    <property type="entry name" value="FerI"/>
    <property type="match status" value="1"/>
</dbReference>
<dbReference type="SUPFAM" id="SSF49562">
    <property type="entry name" value="C2 domain (Calcium/lipid-binding domain, CaLB)"/>
    <property type="match status" value="7"/>
</dbReference>
<dbReference type="PROSITE" id="PS50004">
    <property type="entry name" value="C2"/>
    <property type="match status" value="7"/>
</dbReference>
<evidence type="ECO:0000250" key="1">
    <source>
        <dbReference type="UniProtKB" id="Q9ERC5"/>
    </source>
</evidence>
<evidence type="ECO:0000255" key="2"/>
<evidence type="ECO:0000255" key="3">
    <source>
        <dbReference type="PROSITE-ProRule" id="PRU00041"/>
    </source>
</evidence>
<evidence type="ECO:0000256" key="4">
    <source>
        <dbReference type="SAM" id="MobiDB-lite"/>
    </source>
</evidence>
<evidence type="ECO:0000269" key="5">
    <source>
    </source>
</evidence>
<evidence type="ECO:0000269" key="6">
    <source>
    </source>
</evidence>
<evidence type="ECO:0000269" key="7">
    <source>
    </source>
</evidence>
<evidence type="ECO:0000269" key="8">
    <source>
    </source>
</evidence>
<evidence type="ECO:0000269" key="9">
    <source>
    </source>
</evidence>
<evidence type="ECO:0000269" key="10">
    <source>
    </source>
</evidence>
<evidence type="ECO:0000303" key="11">
    <source>
    </source>
</evidence>
<evidence type="ECO:0000303" key="12">
    <source>
    </source>
</evidence>
<evidence type="ECO:0000303" key="13">
    <source>
    </source>
</evidence>
<evidence type="ECO:0000303" key="14">
    <source>
    </source>
</evidence>
<evidence type="ECO:0000303" key="15">
    <source>
    </source>
</evidence>
<evidence type="ECO:0000305" key="16"/>
<name>OTOF_MOUSE</name>
<proteinExistence type="evidence at protein level"/>
<accession>Q9ESF1</accession>
<accession>A3KLM3</accession>
<accession>B2RWU0</accession>
<accession>Q8CCE7</accession>
<accession>Q9ESF2</accession>
<reference key="1">
    <citation type="journal article" date="2000" name="Am. J. Hum. Genet.">
        <title>OTOF encodes multiple long and short isoforms: genetic evidence that the long ones underlie recessive deafness DFNB9.</title>
        <authorList>
            <person name="Yasunaga S."/>
            <person name="Grati M."/>
            <person name="Chardenoux S."/>
            <person name="Smith T.N."/>
            <person name="Friedman T.B."/>
            <person name="Lalwani A.K."/>
            <person name="Wilcox E.R."/>
            <person name="Petit C."/>
        </authorList>
    </citation>
    <scope>NUCLEOTIDE SEQUENCE [MRNA] (ISOFORMS 1 AND 2)</scope>
    <scope>ALTERNATIVE SPLICING</scope>
    <source>
        <tissue>Brain</tissue>
        <tissue>Cochlea</tissue>
    </source>
</reference>
<reference key="2">
    <citation type="journal article" date="2006" name="Cell">
        <title>Otoferlin, defective in a human deafness form, is essential for exocytosis at the auditory ribbon synapse.</title>
        <authorList>
            <person name="Roux I."/>
            <person name="Safieddine S."/>
            <person name="Nouvian R."/>
            <person name="Grati M."/>
            <person name="Simmler M.-C."/>
            <person name="Bahloul A."/>
            <person name="Perfettini I."/>
            <person name="Le Gall M."/>
            <person name="Rostaing P."/>
            <person name="Hamard G."/>
            <person name="Triller A."/>
            <person name="Avan P."/>
            <person name="Moser T."/>
            <person name="Petit C."/>
        </authorList>
    </citation>
    <scope>NUCLEOTIDE SEQUENCE [MRNA] (ISOFORM 2)</scope>
    <scope>FUNCTION</scope>
    <scope>DISRUPTION PHENOTYPE</scope>
    <scope>INTERACTION WITH SNAP25 AND STX1</scope>
    <scope>SUBCELLULAR LOCATION</scope>
    <scope>TISSUE SPECIFICITY</scope>
    <scope>DEVELOPMENTAL STAGE</scope>
    <source>
        <strain>BALB/cJ</strain>
        <tissue>Cochlea</tissue>
    </source>
</reference>
<reference key="3">
    <citation type="journal article" date="2004" name="Genome Res.">
        <title>The status, quality, and expansion of the NIH full-length cDNA project: the Mammalian Gene Collection (MGC).</title>
        <authorList>
            <consortium name="The MGC Project Team"/>
        </authorList>
    </citation>
    <scope>NUCLEOTIDE SEQUENCE [LARGE SCALE MRNA] (ISOFORM 3)</scope>
    <source>
        <tissue>Brain</tissue>
    </source>
</reference>
<reference key="4">
    <citation type="journal article" date="2005" name="Science">
        <title>The transcriptional landscape of the mammalian genome.</title>
        <authorList>
            <person name="Carninci P."/>
            <person name="Kasukawa T."/>
            <person name="Katayama S."/>
            <person name="Gough J."/>
            <person name="Frith M.C."/>
            <person name="Maeda N."/>
            <person name="Oyama R."/>
            <person name="Ravasi T."/>
            <person name="Lenhard B."/>
            <person name="Wells C."/>
            <person name="Kodzius R."/>
            <person name="Shimokawa K."/>
            <person name="Bajic V.B."/>
            <person name="Brenner S.E."/>
            <person name="Batalov S."/>
            <person name="Forrest A.R."/>
            <person name="Zavolan M."/>
            <person name="Davis M.J."/>
            <person name="Wilming L.G."/>
            <person name="Aidinis V."/>
            <person name="Allen J.E."/>
            <person name="Ambesi-Impiombato A."/>
            <person name="Apweiler R."/>
            <person name="Aturaliya R.N."/>
            <person name="Bailey T.L."/>
            <person name="Bansal M."/>
            <person name="Baxter L."/>
            <person name="Beisel K.W."/>
            <person name="Bersano T."/>
            <person name="Bono H."/>
            <person name="Chalk A.M."/>
            <person name="Chiu K.P."/>
            <person name="Choudhary V."/>
            <person name="Christoffels A."/>
            <person name="Clutterbuck D.R."/>
            <person name="Crowe M.L."/>
            <person name="Dalla E."/>
            <person name="Dalrymple B.P."/>
            <person name="de Bono B."/>
            <person name="Della Gatta G."/>
            <person name="di Bernardo D."/>
            <person name="Down T."/>
            <person name="Engstrom P."/>
            <person name="Fagiolini M."/>
            <person name="Faulkner G."/>
            <person name="Fletcher C.F."/>
            <person name="Fukushima T."/>
            <person name="Furuno M."/>
            <person name="Futaki S."/>
            <person name="Gariboldi M."/>
            <person name="Georgii-Hemming P."/>
            <person name="Gingeras T.R."/>
            <person name="Gojobori T."/>
            <person name="Green R.E."/>
            <person name="Gustincich S."/>
            <person name="Harbers M."/>
            <person name="Hayashi Y."/>
            <person name="Hensch T.K."/>
            <person name="Hirokawa N."/>
            <person name="Hill D."/>
            <person name="Huminiecki L."/>
            <person name="Iacono M."/>
            <person name="Ikeo K."/>
            <person name="Iwama A."/>
            <person name="Ishikawa T."/>
            <person name="Jakt M."/>
            <person name="Kanapin A."/>
            <person name="Katoh M."/>
            <person name="Kawasawa Y."/>
            <person name="Kelso J."/>
            <person name="Kitamura H."/>
            <person name="Kitano H."/>
            <person name="Kollias G."/>
            <person name="Krishnan S.P."/>
            <person name="Kruger A."/>
            <person name="Kummerfeld S.K."/>
            <person name="Kurochkin I.V."/>
            <person name="Lareau L.F."/>
            <person name="Lazarevic D."/>
            <person name="Lipovich L."/>
            <person name="Liu J."/>
            <person name="Liuni S."/>
            <person name="McWilliam S."/>
            <person name="Madan Babu M."/>
            <person name="Madera M."/>
            <person name="Marchionni L."/>
            <person name="Matsuda H."/>
            <person name="Matsuzawa S."/>
            <person name="Miki H."/>
            <person name="Mignone F."/>
            <person name="Miyake S."/>
            <person name="Morris K."/>
            <person name="Mottagui-Tabar S."/>
            <person name="Mulder N."/>
            <person name="Nakano N."/>
            <person name="Nakauchi H."/>
            <person name="Ng P."/>
            <person name="Nilsson R."/>
            <person name="Nishiguchi S."/>
            <person name="Nishikawa S."/>
            <person name="Nori F."/>
            <person name="Ohara O."/>
            <person name="Okazaki Y."/>
            <person name="Orlando V."/>
            <person name="Pang K.C."/>
            <person name="Pavan W.J."/>
            <person name="Pavesi G."/>
            <person name="Pesole G."/>
            <person name="Petrovsky N."/>
            <person name="Piazza S."/>
            <person name="Reed J."/>
            <person name="Reid J.F."/>
            <person name="Ring B.Z."/>
            <person name="Ringwald M."/>
            <person name="Rost B."/>
            <person name="Ruan Y."/>
            <person name="Salzberg S.L."/>
            <person name="Sandelin A."/>
            <person name="Schneider C."/>
            <person name="Schoenbach C."/>
            <person name="Sekiguchi K."/>
            <person name="Semple C.A."/>
            <person name="Seno S."/>
            <person name="Sessa L."/>
            <person name="Sheng Y."/>
            <person name="Shibata Y."/>
            <person name="Shimada H."/>
            <person name="Shimada K."/>
            <person name="Silva D."/>
            <person name="Sinclair B."/>
            <person name="Sperling S."/>
            <person name="Stupka E."/>
            <person name="Sugiura K."/>
            <person name="Sultana R."/>
            <person name="Takenaka Y."/>
            <person name="Taki K."/>
            <person name="Tammoja K."/>
            <person name="Tan S.L."/>
            <person name="Tang S."/>
            <person name="Taylor M.S."/>
            <person name="Tegner J."/>
            <person name="Teichmann S.A."/>
            <person name="Ueda H.R."/>
            <person name="van Nimwegen E."/>
            <person name="Verardo R."/>
            <person name="Wei C.L."/>
            <person name="Yagi K."/>
            <person name="Yamanishi H."/>
            <person name="Zabarovsky E."/>
            <person name="Zhu S."/>
            <person name="Zimmer A."/>
            <person name="Hide W."/>
            <person name="Bult C."/>
            <person name="Grimmond S.M."/>
            <person name="Teasdale R.D."/>
            <person name="Liu E.T."/>
            <person name="Brusic V."/>
            <person name="Quackenbush J."/>
            <person name="Wahlestedt C."/>
            <person name="Mattick J.S."/>
            <person name="Hume D.A."/>
            <person name="Kai C."/>
            <person name="Sasaki D."/>
            <person name="Tomaru Y."/>
            <person name="Fukuda S."/>
            <person name="Kanamori-Katayama M."/>
            <person name="Suzuki M."/>
            <person name="Aoki J."/>
            <person name="Arakawa T."/>
            <person name="Iida J."/>
            <person name="Imamura K."/>
            <person name="Itoh M."/>
            <person name="Kato T."/>
            <person name="Kawaji H."/>
            <person name="Kawagashira N."/>
            <person name="Kawashima T."/>
            <person name="Kojima M."/>
            <person name="Kondo S."/>
            <person name="Konno H."/>
            <person name="Nakano K."/>
            <person name="Ninomiya N."/>
            <person name="Nishio T."/>
            <person name="Okada M."/>
            <person name="Plessy C."/>
            <person name="Shibata K."/>
            <person name="Shiraki T."/>
            <person name="Suzuki S."/>
            <person name="Tagami M."/>
            <person name="Waki K."/>
            <person name="Watahiki A."/>
            <person name="Okamura-Oho Y."/>
            <person name="Suzuki H."/>
            <person name="Kawai J."/>
            <person name="Hayashizaki Y."/>
        </authorList>
    </citation>
    <scope>NUCLEOTIDE SEQUENCE [LARGE SCALE MRNA] OF 954-1997 (ISOFORM 2)</scope>
    <source>
        <strain>C57BL/6J</strain>
        <tissue>Testis</tissue>
    </source>
</reference>
<reference key="5">
    <citation type="journal article" date="2007" name="J. Neurosci.">
        <title>A forward genetics screen in mice identifies recessive deafness traits and reveals that pejvakin is essential for outer hair cell function.</title>
        <authorList>
            <person name="Schwander M."/>
            <person name="Sczaniecka A."/>
            <person name="Grillet N."/>
            <person name="Bailey J.S."/>
            <person name="Avenarius M."/>
            <person name="Najmabadi H."/>
            <person name="Steffy B.M."/>
            <person name="Federe G.C."/>
            <person name="Lagler E.A."/>
            <person name="Banan R."/>
            <person name="Hice R."/>
            <person name="Grabowski-Boase L."/>
            <person name="Keithley E.M."/>
            <person name="Ryan A.F."/>
            <person name="Housley G.D."/>
            <person name="Wiltshire T."/>
            <person name="Smith R.J."/>
            <person name="Tarantino L.M."/>
            <person name="Mueller U."/>
        </authorList>
    </citation>
    <scope>DISRUPTION PHENOTYPE</scope>
</reference>
<reference key="6">
    <citation type="journal article" date="1999" name="Nat. Genet.">
        <title>A mutation in OTOF, encoding otoferlin, a FER-1-like protein, causes DFNB9, a nonsyndromic form of deafness.</title>
        <authorList>
            <person name="Yasunaga S."/>
            <person name="Grati M."/>
            <person name="Cohen-Salmon M."/>
            <person name="El-Amraoui A."/>
            <person name="Mustapha M."/>
            <person name="Salem N."/>
            <person name="El-Zir E."/>
            <person name="Loiselet J."/>
            <person name="Petit C."/>
        </authorList>
    </citation>
    <scope>TISSUE SPECIFICITY</scope>
</reference>
<reference key="7">
    <citation type="journal article" date="2006" name="Eur. J. Neurosci.">
        <title>Differential expression of otoferlin in brain, vestibular system, immature and mature cochlea of the rat.</title>
        <authorList>
            <person name="Schug N."/>
            <person name="Braig C."/>
            <person name="Zimmermann U."/>
            <person name="Engel J."/>
            <person name="Winter H."/>
            <person name="Ruth P."/>
            <person name="Blin N."/>
            <person name="Pfister M."/>
            <person name="Kalbacher H."/>
            <person name="Knipper M."/>
        </authorList>
    </citation>
    <scope>TISSUE SPECIFICITY</scope>
</reference>
<reference key="8">
    <citation type="journal article" date="2008" name="Hum. Mol. Genet.">
        <title>Rab8b GTPase, a protein transport regulator, is an interacting partner of otoferlin, defective in a human autosomal recessive deafness form.</title>
        <authorList>
            <person name="Heidrych P."/>
            <person name="Zimmermann U."/>
            <person name="Bress A."/>
            <person name="Pusch C.M."/>
            <person name="Ruth P."/>
            <person name="Pfister M."/>
            <person name="Knipper M."/>
            <person name="Blin N."/>
        </authorList>
    </citation>
    <scope>FUNCTION</scope>
    <scope>INTERACTION WITH RAB8B</scope>
    <scope>SUBCELLULAR LOCATION</scope>
    <scope>TISSUE SPECIFICITY</scope>
</reference>
<reference key="9">
    <citation type="journal article" date="2008" name="J. Neurosci.">
        <title>Calcium- and otoferlin-dependent exocytosis by immature outer hair cells.</title>
        <authorList>
            <person name="Beurg M."/>
            <person name="Safieddine S."/>
            <person name="Roux I."/>
            <person name="Bouleau Y."/>
            <person name="Petit C."/>
            <person name="Dulon D."/>
        </authorList>
    </citation>
    <scope>FUNCTION</scope>
    <scope>SUBCELLULAR LOCATION</scope>
</reference>
<keyword id="KW-0025">Alternative splicing</keyword>
<keyword id="KW-0106">Calcium</keyword>
<keyword id="KW-1003">Cell membrane</keyword>
<keyword id="KW-0966">Cell projection</keyword>
<keyword id="KW-0175">Coiled coil</keyword>
<keyword id="KW-0968">Cytoplasmic vesicle</keyword>
<keyword id="KW-0209">Deafness</keyword>
<keyword id="KW-0256">Endoplasmic reticulum</keyword>
<keyword id="KW-0333">Golgi apparatus</keyword>
<keyword id="KW-1009">Hearing</keyword>
<keyword id="KW-0472">Membrane</keyword>
<keyword id="KW-0479">Metal-binding</keyword>
<keyword id="KW-1185">Reference proteome</keyword>
<keyword id="KW-0677">Repeat</keyword>
<keyword id="KW-0735">Signal-anchor</keyword>
<keyword id="KW-0770">Synapse</keyword>
<keyword id="KW-0812">Transmembrane</keyword>
<keyword id="KW-1133">Transmembrane helix</keyword>
<comment type="function">
    <text evidence="6 9 10">Key calcium ion sensor involved in the Ca(2+)-triggered synaptic vesicle-plasma membrane fusion and in the control of neurotransmitter release at these output synapses. Interacts in a calcium-dependent manner to the presynaptic SNARE proteins at ribbon synapses of cochlear inner hair cells (IHCs) to trigger exocytosis of neurotransmitter. Also essential to synaptic exocytosis in immature outer hair cells (OHCs). May also play a role within the recycling of endosomes.</text>
</comment>
<comment type="cofactor">
    <cofactor evidence="3">
        <name>Ca(2+)</name>
        <dbReference type="ChEBI" id="CHEBI:29108"/>
    </cofactor>
    <text>Binds Ca(2+). The ions are bound to the C2 1 domain.</text>
</comment>
<comment type="subunit">
    <text evidence="6 10">Interacts with SNAP25; the interaction is direct. Interacts with STX1; the interaction is direct. Interacts with RAB8B.</text>
</comment>
<comment type="interaction">
    <interactant intactId="EBI-1768732">
        <id>Q9ESF1</id>
    </interactant>
    <interactant intactId="EBI-30868772">
        <id>Q9CR89</id>
        <label>Ergic2</label>
    </interactant>
    <organismsDiffer>false</organismsDiffer>
    <experiments>3</experiments>
</comment>
<comment type="subcellular location">
    <subcellularLocation>
        <location evidence="6">Cytoplasmic vesicle</location>
        <location evidence="6">Secretory vesicle</location>
        <location evidence="6">Synaptic vesicle membrane</location>
        <topology>Single-pass type II membrane protein</topology>
    </subcellularLocation>
    <subcellularLocation>
        <location evidence="6">Basolateral cell membrane</location>
        <topology>Single-pass type II membrane protein</topology>
    </subcellularLocation>
    <subcellularLocation>
        <location evidence="10">Endoplasmic reticulum membrane</location>
        <topology>Single-pass type II membrane protein</topology>
    </subcellularLocation>
    <subcellularLocation>
        <location evidence="10">Golgi apparatus membrane</location>
        <topology evidence="16">Single-pass type II membrane protein</topology>
    </subcellularLocation>
    <subcellularLocation>
        <location evidence="6">Presynaptic cell membrane</location>
        <topology evidence="16">Single-pass type II membrane protein</topology>
    </subcellularLocation>
    <subcellularLocation>
        <location>Cell membrane</location>
        <topology>Single-pass type II membrane protein</topology>
    </subcellularLocation>
    <text>Detected at basolateral cell membrane with synaptic vesicles surrounding the ribbon and at the presynaptic plasma membrane in the inner hair cells (IHCs) at postnatal day 30 (P30). Colocalizes with GPR25 and RAB8B in inner hair cells.</text>
</comment>
<comment type="alternative products">
    <event type="alternative splicing"/>
    <isoform>
        <id>Q9ESF1-1</id>
        <name>1</name>
        <sequence type="displayed"/>
    </isoform>
    <isoform>
        <id>Q9ESF1-2</id>
        <name>2</name>
        <sequence type="described" ref="VSP_001512 VSP_001513 VSP_001514"/>
    </isoform>
    <isoform>
        <id>Q9ESF1-3</id>
        <name>3</name>
        <sequence type="described" ref="VSP_001513"/>
    </isoform>
    <text>Additional isoforms seem to exist.</text>
</comment>
<comment type="tissue specificity">
    <text evidence="5 6 7 10">Isoform 1 is expressed in cochlea and brain. Expressed in the cochlear and vestibular hair cells. Expressed in both inner and outer hair cells (IHCs and OHCs) and cochlear ganglions neurons at postnatal day 2 (P2) and 6 (P6). Expressed only in IHCs at postnatal day 60 (P60) (at protein level). Strongly expressed in brain and inner ear. In the inner ear, it is mainly expressed in the cochlear IHC and vestibular type I sensory hair cells. Weakly expressed in eye, heart, skeletal muscle, liver, kidney, lung and testis.</text>
</comment>
<comment type="developmental stage">
    <text evidence="6">Expressed in the organ of Corti in the inner hair cells (IHCs), but not in the outer hair cells (OHCs) at 16 dpc. Expressed strongly in the IHCs and faintly in the OHCs at 18 dpc (at protein level).</text>
</comment>
<comment type="domain">
    <text evidence="1">The N-terminal first 124 residues can be classified as C2 domain, based on their 3D-structure. They are not sufficient for calcium ion or phospholipid binding (By similarity).</text>
</comment>
<comment type="disruption phenotype">
    <text evidence="6 8">Mice lacking Otof display hearing loss (PubMed:17055430, PubMed:17329413). Both outer hair cells (OHCs) and the afferent auditory pathway are functional (PubMed:17055430). Despite normal inner hair cells (IHCs) and ribbon synapse ultrastructures, these mice exhibit an almost complete abolition of IHC synaptic exocytosis in response to cell depolarization (PubMed:17055430).</text>
</comment>
<comment type="similarity">
    <text evidence="16">Belongs to the ferlin family.</text>
</comment>
<protein>
    <recommendedName>
        <fullName>Otoferlin</fullName>
    </recommendedName>
    <alternativeName>
        <fullName>Fer-1-like protein 2</fullName>
    </alternativeName>
    <alternativeName>
        <fullName evidence="15">Protein pachanga</fullName>
    </alternativeName>
</protein>
<sequence>MALIVHLKTVSELRGKGDRIAKVTFRGQSFYSRVLENCEGVADFDETFRWPVASSIDRNEVLEIQIFNYSKVFSNKLIGTFCMVLQKVVEENRVEVTDTLMDDSNAIIKTSLSMEVRYQATDGTVGPWDDGDFLGDESLQEEKDSQETDGLLPGSRPSTRISGEKSFRRAGRSVFSAMKLGKTRSHKEEPQRQDEPAVLEMEDLDHLAIQLGDGLDPDSVSLASVTALTSNVSNKRSKPDIKMEPSAGRPMDYQVSITVIEARQLVGLNMDPVVCVEVGDDKKYTSMKESTNCPYYNEYFVFDFHVSPDVMFDKIIKISVIHSKNLLRSGTLVGSFKMDVGTVYSQPEHQFHHKWAILSDPDDISAGLKGYVKCDVAVVGKGDNIKTPHKANETDEDDIEGNLLLPEGVPPERQWARFYVKIYRAEGLPRMNTSLMANVKKAFIGENKDLVDPYVQVFFAGQKGKTSVQKSSYEPLWNEQVVFTDLFPPLCKRMKVQIRDSDKVNDVAIGTHFIDLRKISNDGDKGFLPTLGPAWVNMYGSTRNYTLLDEHQDLNEGLGEGVSFRARLMLGLAVEILDTSNPELTSSTEVQVEQATPVSESCTGRMEEFFLFGAFLEASMIDRKNGDKPITFEVTIGNYGNEVDGMSRPLRPRPRKEPGDEEEVDLIQNSSDDEGDEAGDLASVSSTPPMRPQITDRNYFHLPYLERKPCIYIKSWWPDQRRRLYNANIMDHIADKLEEGLNDVQEMIKTEKSYPERRLRGVLEELSCGCHRFLSLSDKDQGRSSRTRLDRERLKSCMRELESMGQQAKSLRAQVKRHTVRDKLRLCQNFLQKLRFLADEPQHSIPDVFIWMMSNNKRIAYARVPSKDLLFSIVEEELGKDCAKVKTLFLKLPGKRGFGSAGWTVQAKLELYLWLGLSKQRKDFLCGLPCGFEEVKAAQGLGLHSFPPISLVYTKKQAFQLRAHMYQARSLFAADSSGLSDPFARVFFINQSQCTEVLNETLCPTWDQMLVFDNLELYGEAHELRDDPPIIVIEIYDQDSMGKADFMGRTFAKPLVKMADEAYCPPRFPPQLEYYQIYRGSATAGDLLAAFELLQIGPSGKADLPPINGPVDMDRGPIMPVPVGIRPVLSKYRVEVLFWGLRDLKRVNLAQVDRPRVDIECAGKGVQSSLIHNYKKNPNFNTLVKWFEVDLPENELLHPPLNIRVVDCRAFGRYTLVGSHAVSSLRRFIYRPPDRSAPNWNTTVRLLRGCHRLRNGGPSSRPTGEVVVSMEPEEPVKKLETMVKLDATSDAVVKVDVAEDEKERKKKKKKGPSEEPEEEEPDESMLDWWSKYFASIDTMKEQLRQHETSGTDLEEKEEMESAEGLKGPMKSKEKSRAAKEEKKKKNQSPGPGQGSEAPEKKKAKIDELKVYPKELESEFDSFEDWLHTFNLLRGKTGDDEDGSTEEERIVGRFKGSLCVYKVPLPEDVSREAGYDPTYGMFQGIPSNDPINVLVRIYVVRATDLHPADINGKADPYIAIKLGKTDIRDKENYISKQLNPVFGKSFDIEASFPMESMLTVAVYDWDLVGTDDLIGETKIDLENRFYSKHRATCGIAQTYSIHGYNIWRDPMKPSQILTRLCKEGKVDGPHFGPHGRVRVANRVFTGPSEIEDENGQRKPTDEHVALSALRHWEDIPRVGCRLVPEHVETRPLLNPDKPGIEQGRLELWVDMFPMDMPAPGTPLDISPRKPKKYELRVIVWNTDEVVLEDDDFFTGEKSSDIFVRGWLKGQQEDKQDTDVHYHSLTGEGNFNWRYLFPFDYLAAEEKIVMSKKESMFSWDETEYKIPARLTLQIWDADHFSADDFLGAIELDLNRFPRGAKTAKQCTMEMATGEVDVPLVSIFKQKRVKGWWPLLARNENDEFELTGKVEAELHLLTAEEAEKNPVGLARNEPDPLEKPNRPDTSFIWFLNPLKSARYFLWHTYRWLLLKFLLLFLLLLLFALFLYSLPGYLAKKILGA</sequence>